<organism>
    <name type="scientific">Rickettsia akari (strain Hartford)</name>
    <dbReference type="NCBI Taxonomy" id="293614"/>
    <lineage>
        <taxon>Bacteria</taxon>
        <taxon>Pseudomonadati</taxon>
        <taxon>Pseudomonadota</taxon>
        <taxon>Alphaproteobacteria</taxon>
        <taxon>Rickettsiales</taxon>
        <taxon>Rickettsiaceae</taxon>
        <taxon>Rickettsieae</taxon>
        <taxon>Rickettsia</taxon>
        <taxon>spotted fever group</taxon>
    </lineage>
</organism>
<keyword id="KW-0687">Ribonucleoprotein</keyword>
<keyword id="KW-0689">Ribosomal protein</keyword>
<gene>
    <name evidence="1" type="primary">rpsJ</name>
    <name type="ordered locus">A1C_05110</name>
</gene>
<evidence type="ECO:0000255" key="1">
    <source>
        <dbReference type="HAMAP-Rule" id="MF_00508"/>
    </source>
</evidence>
<evidence type="ECO:0000305" key="2"/>
<reference key="1">
    <citation type="submission" date="2007-09" db="EMBL/GenBank/DDBJ databases">
        <title>Complete genome sequence of Rickettsia akari.</title>
        <authorList>
            <person name="Madan A."/>
            <person name="Fahey J."/>
            <person name="Helton E."/>
            <person name="Ketteman M."/>
            <person name="Madan A."/>
            <person name="Rodrigues S."/>
            <person name="Sanchez A."/>
            <person name="Whiting M."/>
            <person name="Dasch G."/>
            <person name="Eremeeva M."/>
        </authorList>
    </citation>
    <scope>NUCLEOTIDE SEQUENCE [LARGE SCALE GENOMIC DNA]</scope>
    <source>
        <strain>Hartford</strain>
    </source>
</reference>
<sequence>MKNKIKIRLKSFDHHSLDQATKEIVSAVKRTFASINGPIPLPRKIERFTVNRSPHVHKKSREQFEIRKHKRLLVIDDPNPAVVDALSKVDLAAGVDVVIELESGE</sequence>
<comment type="function">
    <text evidence="1">Involved in the binding of tRNA to the ribosomes.</text>
</comment>
<comment type="subunit">
    <text evidence="1">Part of the 30S ribosomal subunit.</text>
</comment>
<comment type="similarity">
    <text evidence="1">Belongs to the universal ribosomal protein uS10 family.</text>
</comment>
<protein>
    <recommendedName>
        <fullName evidence="1">Small ribosomal subunit protein uS10</fullName>
    </recommendedName>
    <alternativeName>
        <fullName evidence="2">30S ribosomal protein S10</fullName>
    </alternativeName>
</protein>
<proteinExistence type="inferred from homology"/>
<accession>A8GPF1</accession>
<feature type="chain" id="PRO_1000015099" description="Small ribosomal subunit protein uS10">
    <location>
        <begin position="1"/>
        <end position="105"/>
    </location>
</feature>
<dbReference type="EMBL" id="CP000847">
    <property type="protein sequence ID" value="ABV75276.1"/>
    <property type="molecule type" value="Genomic_DNA"/>
</dbReference>
<dbReference type="RefSeq" id="WP_012149906.1">
    <property type="nucleotide sequence ID" value="NC_009881.1"/>
</dbReference>
<dbReference type="SMR" id="A8GPF1"/>
<dbReference type="STRING" id="293614.A1C_05110"/>
<dbReference type="KEGG" id="rak:A1C_05110"/>
<dbReference type="eggNOG" id="COG0051">
    <property type="taxonomic scope" value="Bacteria"/>
</dbReference>
<dbReference type="HOGENOM" id="CLU_122625_1_3_5"/>
<dbReference type="Proteomes" id="UP000006830">
    <property type="component" value="Chromosome"/>
</dbReference>
<dbReference type="GO" id="GO:1990904">
    <property type="term" value="C:ribonucleoprotein complex"/>
    <property type="evidence" value="ECO:0007669"/>
    <property type="project" value="UniProtKB-KW"/>
</dbReference>
<dbReference type="GO" id="GO:0005840">
    <property type="term" value="C:ribosome"/>
    <property type="evidence" value="ECO:0007669"/>
    <property type="project" value="UniProtKB-KW"/>
</dbReference>
<dbReference type="GO" id="GO:0003735">
    <property type="term" value="F:structural constituent of ribosome"/>
    <property type="evidence" value="ECO:0007669"/>
    <property type="project" value="InterPro"/>
</dbReference>
<dbReference type="GO" id="GO:0000049">
    <property type="term" value="F:tRNA binding"/>
    <property type="evidence" value="ECO:0007669"/>
    <property type="project" value="UniProtKB-UniRule"/>
</dbReference>
<dbReference type="GO" id="GO:0006412">
    <property type="term" value="P:translation"/>
    <property type="evidence" value="ECO:0007669"/>
    <property type="project" value="UniProtKB-UniRule"/>
</dbReference>
<dbReference type="FunFam" id="3.30.70.600:FF:000003">
    <property type="entry name" value="30S ribosomal protein S10"/>
    <property type="match status" value="1"/>
</dbReference>
<dbReference type="Gene3D" id="3.30.70.600">
    <property type="entry name" value="Ribosomal protein S10 domain"/>
    <property type="match status" value="1"/>
</dbReference>
<dbReference type="HAMAP" id="MF_00508">
    <property type="entry name" value="Ribosomal_uS10"/>
    <property type="match status" value="1"/>
</dbReference>
<dbReference type="InterPro" id="IPR001848">
    <property type="entry name" value="Ribosomal_uS10"/>
</dbReference>
<dbReference type="InterPro" id="IPR027486">
    <property type="entry name" value="Ribosomal_uS10_dom"/>
</dbReference>
<dbReference type="InterPro" id="IPR036838">
    <property type="entry name" value="Ribosomal_uS10_dom_sf"/>
</dbReference>
<dbReference type="NCBIfam" id="NF001861">
    <property type="entry name" value="PRK00596.1"/>
    <property type="match status" value="1"/>
</dbReference>
<dbReference type="NCBIfam" id="TIGR01049">
    <property type="entry name" value="rpsJ_bact"/>
    <property type="match status" value="1"/>
</dbReference>
<dbReference type="PANTHER" id="PTHR11700">
    <property type="entry name" value="30S RIBOSOMAL PROTEIN S10 FAMILY MEMBER"/>
    <property type="match status" value="1"/>
</dbReference>
<dbReference type="Pfam" id="PF00338">
    <property type="entry name" value="Ribosomal_S10"/>
    <property type="match status" value="1"/>
</dbReference>
<dbReference type="PRINTS" id="PR00971">
    <property type="entry name" value="RIBOSOMALS10"/>
</dbReference>
<dbReference type="SMART" id="SM01403">
    <property type="entry name" value="Ribosomal_S10"/>
    <property type="match status" value="1"/>
</dbReference>
<dbReference type="SUPFAM" id="SSF54999">
    <property type="entry name" value="Ribosomal protein S10"/>
    <property type="match status" value="1"/>
</dbReference>
<name>RS10_RICAH</name>